<keyword id="KW-0046">Antibiotic resistance</keyword>
<keyword id="KW-0997">Cell inner membrane</keyword>
<keyword id="KW-1003">Cell membrane</keyword>
<keyword id="KW-0133">Cell shape</keyword>
<keyword id="KW-0961">Cell wall biogenesis/degradation</keyword>
<keyword id="KW-0378">Hydrolase</keyword>
<keyword id="KW-0472">Membrane</keyword>
<keyword id="KW-0573">Peptidoglycan synthesis</keyword>
<keyword id="KW-0812">Transmembrane</keyword>
<keyword id="KW-1133">Transmembrane helix</keyword>
<gene>
    <name evidence="1" type="primary">uppP</name>
    <name type="ordered locus">RPE_0504</name>
</gene>
<dbReference type="EC" id="3.6.1.27" evidence="1"/>
<dbReference type="EMBL" id="CP000463">
    <property type="protein sequence ID" value="ABJ04463.1"/>
    <property type="molecule type" value="Genomic_DNA"/>
</dbReference>
<dbReference type="SMR" id="Q07UC1"/>
<dbReference type="STRING" id="316055.RPE_0504"/>
<dbReference type="KEGG" id="rpe:RPE_0504"/>
<dbReference type="eggNOG" id="COG1968">
    <property type="taxonomic scope" value="Bacteria"/>
</dbReference>
<dbReference type="HOGENOM" id="CLU_060296_2_0_5"/>
<dbReference type="OrthoDB" id="9808289at2"/>
<dbReference type="GO" id="GO:0005886">
    <property type="term" value="C:plasma membrane"/>
    <property type="evidence" value="ECO:0007669"/>
    <property type="project" value="UniProtKB-SubCell"/>
</dbReference>
<dbReference type="GO" id="GO:0050380">
    <property type="term" value="F:undecaprenyl-diphosphatase activity"/>
    <property type="evidence" value="ECO:0007669"/>
    <property type="project" value="UniProtKB-UniRule"/>
</dbReference>
<dbReference type="GO" id="GO:0071555">
    <property type="term" value="P:cell wall organization"/>
    <property type="evidence" value="ECO:0007669"/>
    <property type="project" value="UniProtKB-KW"/>
</dbReference>
<dbReference type="GO" id="GO:0009252">
    <property type="term" value="P:peptidoglycan biosynthetic process"/>
    <property type="evidence" value="ECO:0007669"/>
    <property type="project" value="UniProtKB-KW"/>
</dbReference>
<dbReference type="GO" id="GO:0008360">
    <property type="term" value="P:regulation of cell shape"/>
    <property type="evidence" value="ECO:0007669"/>
    <property type="project" value="UniProtKB-KW"/>
</dbReference>
<dbReference type="GO" id="GO:0046677">
    <property type="term" value="P:response to antibiotic"/>
    <property type="evidence" value="ECO:0007669"/>
    <property type="project" value="UniProtKB-UniRule"/>
</dbReference>
<dbReference type="HAMAP" id="MF_01006">
    <property type="entry name" value="Undec_diphosphatase"/>
    <property type="match status" value="1"/>
</dbReference>
<dbReference type="InterPro" id="IPR003824">
    <property type="entry name" value="UppP"/>
</dbReference>
<dbReference type="NCBIfam" id="NF001389">
    <property type="entry name" value="PRK00281.1-2"/>
    <property type="match status" value="1"/>
</dbReference>
<dbReference type="NCBIfam" id="NF001390">
    <property type="entry name" value="PRK00281.1-4"/>
    <property type="match status" value="1"/>
</dbReference>
<dbReference type="NCBIfam" id="TIGR00753">
    <property type="entry name" value="undec_PP_bacA"/>
    <property type="match status" value="1"/>
</dbReference>
<dbReference type="PANTHER" id="PTHR30622">
    <property type="entry name" value="UNDECAPRENYL-DIPHOSPHATASE"/>
    <property type="match status" value="1"/>
</dbReference>
<dbReference type="PANTHER" id="PTHR30622:SF3">
    <property type="entry name" value="UNDECAPRENYL-DIPHOSPHATASE"/>
    <property type="match status" value="1"/>
</dbReference>
<dbReference type="Pfam" id="PF02673">
    <property type="entry name" value="BacA"/>
    <property type="match status" value="1"/>
</dbReference>
<proteinExistence type="inferred from homology"/>
<comment type="function">
    <text evidence="1">Catalyzes the dephosphorylation of undecaprenyl diphosphate (UPP). Confers resistance to bacitracin.</text>
</comment>
<comment type="catalytic activity">
    <reaction evidence="1">
        <text>di-trans,octa-cis-undecaprenyl diphosphate + H2O = di-trans,octa-cis-undecaprenyl phosphate + phosphate + H(+)</text>
        <dbReference type="Rhea" id="RHEA:28094"/>
        <dbReference type="ChEBI" id="CHEBI:15377"/>
        <dbReference type="ChEBI" id="CHEBI:15378"/>
        <dbReference type="ChEBI" id="CHEBI:43474"/>
        <dbReference type="ChEBI" id="CHEBI:58405"/>
        <dbReference type="ChEBI" id="CHEBI:60392"/>
        <dbReference type="EC" id="3.6.1.27"/>
    </reaction>
</comment>
<comment type="subcellular location">
    <subcellularLocation>
        <location evidence="1">Cell inner membrane</location>
        <topology evidence="1">Multi-pass membrane protein</topology>
    </subcellularLocation>
</comment>
<comment type="miscellaneous">
    <text>Bacitracin is thought to be involved in the inhibition of peptidoglycan synthesis by sequestering undecaprenyl diphosphate, thereby reducing the pool of lipid carrier available.</text>
</comment>
<comment type="similarity">
    <text evidence="1">Belongs to the UppP family.</text>
</comment>
<name>UPPP_RHOP5</name>
<protein>
    <recommendedName>
        <fullName evidence="1">Undecaprenyl-diphosphatase</fullName>
        <ecNumber evidence="1">3.6.1.27</ecNumber>
    </recommendedName>
    <alternativeName>
        <fullName evidence="1">Bacitracin resistance protein</fullName>
    </alternativeName>
    <alternativeName>
        <fullName evidence="1">Undecaprenyl pyrophosphate phosphatase</fullName>
    </alternativeName>
</protein>
<feature type="chain" id="PRO_0000290756" description="Undecaprenyl-diphosphatase">
    <location>
        <begin position="1"/>
        <end position="268"/>
    </location>
</feature>
<feature type="transmembrane region" description="Helical" evidence="1">
    <location>
        <begin position="47"/>
        <end position="67"/>
    </location>
</feature>
<feature type="transmembrane region" description="Helical" evidence="1">
    <location>
        <begin position="85"/>
        <end position="105"/>
    </location>
</feature>
<feature type="transmembrane region" description="Helical" evidence="1">
    <location>
        <begin position="109"/>
        <end position="129"/>
    </location>
</feature>
<feature type="transmembrane region" description="Helical" evidence="1">
    <location>
        <begin position="144"/>
        <end position="164"/>
    </location>
</feature>
<feature type="transmembrane region" description="Helical" evidence="1">
    <location>
        <begin position="184"/>
        <end position="204"/>
    </location>
</feature>
<feature type="transmembrane region" description="Helical" evidence="1">
    <location>
        <begin position="217"/>
        <end position="237"/>
    </location>
</feature>
<feature type="transmembrane region" description="Helical" evidence="1">
    <location>
        <begin position="246"/>
        <end position="266"/>
    </location>
</feature>
<evidence type="ECO:0000255" key="1">
    <source>
        <dbReference type="HAMAP-Rule" id="MF_01006"/>
    </source>
</evidence>
<accession>Q07UC1</accession>
<sequence length="268" mass="29075">MLADIIRAIILGVVEGVTEFLPVSSTGHLLLAERFFNLGEGPFWKSFAVLIQLGAILAILALYFSKLWNIARGMFSDPAAQRFVIGVLVAFLPAAVIGAASGGLIKEYLFNPWVVCFTLILGGGILLWVDQLELKPVHHEATEFPLPMYLIIGFAQCIAMFPGVSRSGATIVGAMLLGADRRAAAEFSFFLAIPTMLGAFVYDLYKSRADMTMDHGLIVAVGFAVSFITAIIVVKTFLTYVTRHGFALFAWWRVIVGTLGLIALALGR</sequence>
<organism>
    <name type="scientific">Rhodopseudomonas palustris (strain BisA53)</name>
    <dbReference type="NCBI Taxonomy" id="316055"/>
    <lineage>
        <taxon>Bacteria</taxon>
        <taxon>Pseudomonadati</taxon>
        <taxon>Pseudomonadota</taxon>
        <taxon>Alphaproteobacteria</taxon>
        <taxon>Hyphomicrobiales</taxon>
        <taxon>Nitrobacteraceae</taxon>
        <taxon>Rhodopseudomonas</taxon>
    </lineage>
</organism>
<reference key="1">
    <citation type="submission" date="2006-09" db="EMBL/GenBank/DDBJ databases">
        <title>Complete sequence of Rhodopseudomonas palustris BisA53.</title>
        <authorList>
            <consortium name="US DOE Joint Genome Institute"/>
            <person name="Copeland A."/>
            <person name="Lucas S."/>
            <person name="Lapidus A."/>
            <person name="Barry K."/>
            <person name="Detter J.C."/>
            <person name="Glavina del Rio T."/>
            <person name="Hammon N."/>
            <person name="Israni S."/>
            <person name="Dalin E."/>
            <person name="Tice H."/>
            <person name="Pitluck S."/>
            <person name="Chain P."/>
            <person name="Malfatti S."/>
            <person name="Shin M."/>
            <person name="Vergez L."/>
            <person name="Schmutz J."/>
            <person name="Larimer F."/>
            <person name="Land M."/>
            <person name="Hauser L."/>
            <person name="Pelletier D.A."/>
            <person name="Kyrpides N."/>
            <person name="Kim E."/>
            <person name="Harwood C.S."/>
            <person name="Oda Y."/>
            <person name="Richardson P."/>
        </authorList>
    </citation>
    <scope>NUCLEOTIDE SEQUENCE [LARGE SCALE GENOMIC DNA]</scope>
    <source>
        <strain>BisA53</strain>
    </source>
</reference>